<name>KLH40_XENTR</name>
<accession>Q5EB39</accession>
<proteinExistence type="evidence at transcript level"/>
<dbReference type="EMBL" id="BC090098">
    <property type="protein sequence ID" value="AAH90098.1"/>
    <property type="molecule type" value="mRNA"/>
</dbReference>
<dbReference type="RefSeq" id="NP_001015817.1">
    <property type="nucleotide sequence ID" value="NM_001015817.1"/>
</dbReference>
<dbReference type="RefSeq" id="XP_012820108.1">
    <property type="nucleotide sequence ID" value="XM_012964654.3"/>
</dbReference>
<dbReference type="SMR" id="Q5EB39"/>
<dbReference type="FunCoup" id="Q5EB39">
    <property type="interactions" value="62"/>
</dbReference>
<dbReference type="STRING" id="8364.ENSXETP00000009003"/>
<dbReference type="PaxDb" id="8364-ENSXETP00000013576"/>
<dbReference type="DNASU" id="548534"/>
<dbReference type="GeneID" id="548534"/>
<dbReference type="KEGG" id="xtr:548534"/>
<dbReference type="AGR" id="Xenbase:XB-GENE-968841"/>
<dbReference type="CTD" id="131377"/>
<dbReference type="Xenbase" id="XB-GENE-968841">
    <property type="gene designation" value="klhl40"/>
</dbReference>
<dbReference type="eggNOG" id="KOG4441">
    <property type="taxonomic scope" value="Eukaryota"/>
</dbReference>
<dbReference type="HOGENOM" id="CLU_004253_14_4_1"/>
<dbReference type="InParanoid" id="Q5EB39"/>
<dbReference type="OMA" id="RNFACER"/>
<dbReference type="OrthoDB" id="6359816at2759"/>
<dbReference type="PhylomeDB" id="Q5EB39"/>
<dbReference type="Proteomes" id="UP000008143">
    <property type="component" value="Chromosome 6"/>
</dbReference>
<dbReference type="Bgee" id="ENSXETG00000006168">
    <property type="expression patterns" value="Expressed in skeletal muscle tissue and 2 other cell types or tissues"/>
</dbReference>
<dbReference type="GO" id="GO:0031672">
    <property type="term" value="C:A band"/>
    <property type="evidence" value="ECO:0007669"/>
    <property type="project" value="UniProtKB-SubCell"/>
</dbReference>
<dbReference type="GO" id="GO:0031463">
    <property type="term" value="C:Cul3-RING ubiquitin ligase complex"/>
    <property type="evidence" value="ECO:0000250"/>
    <property type="project" value="UniProtKB"/>
</dbReference>
<dbReference type="GO" id="GO:0005737">
    <property type="term" value="C:cytoplasm"/>
    <property type="evidence" value="ECO:0000250"/>
    <property type="project" value="UniProtKB"/>
</dbReference>
<dbReference type="GO" id="GO:0031674">
    <property type="term" value="C:I band"/>
    <property type="evidence" value="ECO:0007669"/>
    <property type="project" value="UniProtKB-SubCell"/>
</dbReference>
<dbReference type="GO" id="GO:0032436">
    <property type="term" value="P:positive regulation of proteasomal ubiquitin-dependent protein catabolic process"/>
    <property type="evidence" value="ECO:0000250"/>
    <property type="project" value="UniProtKB"/>
</dbReference>
<dbReference type="GO" id="GO:0031398">
    <property type="term" value="P:positive regulation of protein ubiquitination"/>
    <property type="evidence" value="ECO:0000250"/>
    <property type="project" value="UniProtKB"/>
</dbReference>
<dbReference type="GO" id="GO:0048741">
    <property type="term" value="P:skeletal muscle fiber development"/>
    <property type="evidence" value="ECO:0000250"/>
    <property type="project" value="UniProtKB"/>
</dbReference>
<dbReference type="GO" id="GO:0098528">
    <property type="term" value="P:skeletal muscle fiber differentiation"/>
    <property type="evidence" value="ECO:0000250"/>
    <property type="project" value="UniProtKB"/>
</dbReference>
<dbReference type="CDD" id="cd18340">
    <property type="entry name" value="BTB_POZ_KLHL40_KBTBD5"/>
    <property type="match status" value="1"/>
</dbReference>
<dbReference type="FunFam" id="3.30.710.10:FF:000006">
    <property type="entry name" value="Kelch repeat and BTB domain-containing 6"/>
    <property type="match status" value="1"/>
</dbReference>
<dbReference type="FunFam" id="1.25.40.420:FF:000001">
    <property type="entry name" value="Kelch-like family member 12"/>
    <property type="match status" value="1"/>
</dbReference>
<dbReference type="FunFam" id="2.120.10.80:FF:000037">
    <property type="entry name" value="Kelch-like family member 40"/>
    <property type="match status" value="1"/>
</dbReference>
<dbReference type="Gene3D" id="1.25.40.420">
    <property type="match status" value="1"/>
</dbReference>
<dbReference type="Gene3D" id="2.120.10.80">
    <property type="entry name" value="Kelch-type beta propeller"/>
    <property type="match status" value="1"/>
</dbReference>
<dbReference type="Gene3D" id="3.30.710.10">
    <property type="entry name" value="Potassium Channel Kv1.1, Chain A"/>
    <property type="match status" value="1"/>
</dbReference>
<dbReference type="InterPro" id="IPR011705">
    <property type="entry name" value="BACK"/>
</dbReference>
<dbReference type="InterPro" id="IPR017096">
    <property type="entry name" value="BTB-kelch_protein"/>
</dbReference>
<dbReference type="InterPro" id="IPR000210">
    <property type="entry name" value="BTB/POZ_dom"/>
</dbReference>
<dbReference type="InterPro" id="IPR015915">
    <property type="entry name" value="Kelch-typ_b-propeller"/>
</dbReference>
<dbReference type="InterPro" id="IPR006652">
    <property type="entry name" value="Kelch_1"/>
</dbReference>
<dbReference type="InterPro" id="IPR030607">
    <property type="entry name" value="KLHL40_BTB/POZ_dom"/>
</dbReference>
<dbReference type="InterPro" id="IPR011333">
    <property type="entry name" value="SKP1/BTB/POZ_sf"/>
</dbReference>
<dbReference type="PANTHER" id="PTHR24412">
    <property type="entry name" value="KELCH PROTEIN"/>
    <property type="match status" value="1"/>
</dbReference>
<dbReference type="PANTHER" id="PTHR24412:SF22">
    <property type="entry name" value="KELCH-LIKE PROTEIN 40"/>
    <property type="match status" value="1"/>
</dbReference>
<dbReference type="Pfam" id="PF07707">
    <property type="entry name" value="BACK"/>
    <property type="match status" value="1"/>
</dbReference>
<dbReference type="Pfam" id="PF00651">
    <property type="entry name" value="BTB"/>
    <property type="match status" value="1"/>
</dbReference>
<dbReference type="Pfam" id="PF24681">
    <property type="entry name" value="Kelch_KLHDC2_KLHL20_DRC7"/>
    <property type="match status" value="1"/>
</dbReference>
<dbReference type="PIRSF" id="PIRSF037037">
    <property type="entry name" value="Kelch-like_protein_gigaxonin"/>
    <property type="match status" value="1"/>
</dbReference>
<dbReference type="SMART" id="SM00875">
    <property type="entry name" value="BACK"/>
    <property type="match status" value="1"/>
</dbReference>
<dbReference type="SMART" id="SM00225">
    <property type="entry name" value="BTB"/>
    <property type="match status" value="1"/>
</dbReference>
<dbReference type="SMART" id="SM00612">
    <property type="entry name" value="Kelch"/>
    <property type="match status" value="4"/>
</dbReference>
<dbReference type="SUPFAM" id="SSF117281">
    <property type="entry name" value="Kelch motif"/>
    <property type="match status" value="1"/>
</dbReference>
<dbReference type="SUPFAM" id="SSF54695">
    <property type="entry name" value="POZ domain"/>
    <property type="match status" value="1"/>
</dbReference>
<dbReference type="PROSITE" id="PS50097">
    <property type="entry name" value="BTB"/>
    <property type="match status" value="1"/>
</dbReference>
<comment type="function">
    <text evidence="1">Substrate-specific adapter of a BCR (BTB-CUL3-RBX1) E3 ubiquitin ligase complex that acts as a key regulator of skeletal muscle development.</text>
</comment>
<comment type="subunit">
    <text evidence="1">Component of the BCR(KLHL40) E3 ubiquitin ligase complex.</text>
</comment>
<comment type="subcellular location">
    <subcellularLocation>
        <location evidence="1">Cytoplasm</location>
    </subcellularLocation>
    <subcellularLocation>
        <location evidence="1">Cytoplasm</location>
        <location evidence="1">Myofibril</location>
        <location evidence="1">Sarcomere</location>
        <location evidence="1">A band</location>
    </subcellularLocation>
    <subcellularLocation>
        <location evidence="1">Cytoplasm</location>
        <location evidence="1">Myofibril</location>
        <location evidence="1">Sarcomere</location>
        <location evidence="1">I band</location>
    </subcellularLocation>
</comment>
<comment type="similarity">
    <text evidence="3">Belongs to the KLHL40 family.</text>
</comment>
<organism>
    <name type="scientific">Xenopus tropicalis</name>
    <name type="common">Western clawed frog</name>
    <name type="synonym">Silurana tropicalis</name>
    <dbReference type="NCBI Taxonomy" id="8364"/>
    <lineage>
        <taxon>Eukaryota</taxon>
        <taxon>Metazoa</taxon>
        <taxon>Chordata</taxon>
        <taxon>Craniata</taxon>
        <taxon>Vertebrata</taxon>
        <taxon>Euteleostomi</taxon>
        <taxon>Amphibia</taxon>
        <taxon>Batrachia</taxon>
        <taxon>Anura</taxon>
        <taxon>Pipoidea</taxon>
        <taxon>Pipidae</taxon>
        <taxon>Xenopodinae</taxon>
        <taxon>Xenopus</taxon>
        <taxon>Silurana</taxon>
    </lineage>
</organism>
<evidence type="ECO:0000250" key="1">
    <source>
        <dbReference type="UniProtKB" id="Q9D783"/>
    </source>
</evidence>
<evidence type="ECO:0000255" key="2">
    <source>
        <dbReference type="PROSITE-ProRule" id="PRU00037"/>
    </source>
</evidence>
<evidence type="ECO:0000305" key="3"/>
<feature type="chain" id="PRO_0000274238" description="Kelch-like protein 40">
    <location>
        <begin position="1"/>
        <end position="614"/>
    </location>
</feature>
<feature type="domain" description="BTB" evidence="2">
    <location>
        <begin position="33"/>
        <end position="100"/>
    </location>
</feature>
<feature type="domain" description="BACK">
    <location>
        <begin position="135"/>
        <end position="237"/>
    </location>
</feature>
<feature type="repeat" description="Kelch 1">
    <location>
        <begin position="353"/>
        <end position="405"/>
    </location>
</feature>
<feature type="repeat" description="Kelch 2">
    <location>
        <begin position="406"/>
        <end position="455"/>
    </location>
</feature>
<feature type="repeat" description="Kelch 3">
    <location>
        <begin position="456"/>
        <end position="503"/>
    </location>
</feature>
<feature type="repeat" description="Kelch 4">
    <location>
        <begin position="505"/>
        <end position="550"/>
    </location>
</feature>
<feature type="repeat" description="Kelch 5">
    <location>
        <begin position="552"/>
        <end position="606"/>
    </location>
</feature>
<gene>
    <name type="primary">klhl40</name>
    <name type="synonym">kbtbd5</name>
</gene>
<reference key="1">
    <citation type="submission" date="2005-02" db="EMBL/GenBank/DDBJ databases">
        <authorList>
            <consortium name="NIH - Xenopus Gene Collection (XGC) project"/>
        </authorList>
    </citation>
    <scope>NUCLEOTIDE SEQUENCE [LARGE SCALE MRNA]</scope>
    <source>
        <tissue>Embryo</tissue>
    </source>
</reference>
<sequence>MALPTQQADELRLYQQTLLQDGLKDMLDHDNFIDCVLKIQGKEFPCHRLVLAACSPYFRAMFLSNLEEGKKKEIDLEDVDPDVMGKILHYIYTSEIEITEKNVQDIFSVANMFQIPSIFTVCVSFLQKKLCLSNCLAIFRLGLLLDCPRLAVSARDFVCDRFHLIARDEEFYDLSPDELIAVISSDSLNIEKEEEVFEVVLKWALKEKEKRAKALPIIFESIRFRLIPQDYIKNKVEKHELVKSDKELLKKLQMVKDAQEGKLPAAVKKTPSKASEGKDGEGVVNGDLEEEEEALPGILNDTLRFGMFLKDMIFMISDTGAVAYDPSANECFFASLSAQIPKNHVSLATKENQLFVAGGLYYNEENKDDPLSSYFLQFDHLDSDWLGMPPVPSARCLFGLGESDNSIYLIGGKELKEGEQTLDTVLCYDRPSFKWGESDPLPYQVYGHTVVSHDNLVYVLGGKGNEKKCLKRVCVYNPKKFEWKDLAPMKTARSLFGSTVHKGKILIAAGVTDTGLTNTIEAYDVKTNKWEEFTEFPQERSSLSLVSMNGTLYAIGGFATTENESGEFVPTELNDIWRFNEEEKKWEGILREIRYASGATFVAARLNILRLTKM</sequence>
<keyword id="KW-0963">Cytoplasm</keyword>
<keyword id="KW-0217">Developmental protein</keyword>
<keyword id="KW-0880">Kelch repeat</keyword>
<keyword id="KW-1185">Reference proteome</keyword>
<keyword id="KW-0677">Repeat</keyword>
<keyword id="KW-0833">Ubl conjugation pathway</keyword>
<protein>
    <recommendedName>
        <fullName>Kelch-like protein 40</fullName>
    </recommendedName>
    <alternativeName>
        <fullName>Kelch repeat and BTB domain-containing protein 5</fullName>
    </alternativeName>
</protein>